<comment type="function">
    <text evidence="1">The glycine cleavage system catalyzes the degradation of glycine.</text>
</comment>
<comment type="catalytic activity">
    <reaction evidence="1">
        <text>N(6)-[(R)-S(8)-aminomethyldihydrolipoyl]-L-lysyl-[protein] + (6S)-5,6,7,8-tetrahydrofolate = N(6)-[(R)-dihydrolipoyl]-L-lysyl-[protein] + (6R)-5,10-methylene-5,6,7,8-tetrahydrofolate + NH4(+)</text>
        <dbReference type="Rhea" id="RHEA:16945"/>
        <dbReference type="Rhea" id="RHEA-COMP:10475"/>
        <dbReference type="Rhea" id="RHEA-COMP:10492"/>
        <dbReference type="ChEBI" id="CHEBI:15636"/>
        <dbReference type="ChEBI" id="CHEBI:28938"/>
        <dbReference type="ChEBI" id="CHEBI:57453"/>
        <dbReference type="ChEBI" id="CHEBI:83100"/>
        <dbReference type="ChEBI" id="CHEBI:83143"/>
        <dbReference type="EC" id="2.1.2.10"/>
    </reaction>
</comment>
<comment type="subunit">
    <text evidence="1">The glycine cleavage system is composed of four proteins: P, T, L and H.</text>
</comment>
<comment type="similarity">
    <text evidence="1">Belongs to the GcvT family.</text>
</comment>
<feature type="chain" id="PRO_1000059080" description="Aminomethyltransferase">
    <location>
        <begin position="1"/>
        <end position="364"/>
    </location>
</feature>
<evidence type="ECO:0000255" key="1">
    <source>
        <dbReference type="HAMAP-Rule" id="MF_00259"/>
    </source>
</evidence>
<gene>
    <name evidence="1" type="primary">gcvT</name>
    <name type="ordered locus">BLi02631</name>
    <name type="ordered locus">BL01562</name>
</gene>
<keyword id="KW-0032">Aminotransferase</keyword>
<keyword id="KW-1185">Reference proteome</keyword>
<keyword id="KW-0808">Transferase</keyword>
<reference key="1">
    <citation type="journal article" date="2004" name="J. Mol. Microbiol. Biotechnol.">
        <title>The complete genome sequence of Bacillus licheniformis DSM13, an organism with great industrial potential.</title>
        <authorList>
            <person name="Veith B."/>
            <person name="Herzberg C."/>
            <person name="Steckel S."/>
            <person name="Feesche J."/>
            <person name="Maurer K.H."/>
            <person name="Ehrenreich P."/>
            <person name="Baeumer S."/>
            <person name="Henne A."/>
            <person name="Liesegang H."/>
            <person name="Merkl R."/>
            <person name="Ehrenreich A."/>
            <person name="Gottschalk G."/>
        </authorList>
    </citation>
    <scope>NUCLEOTIDE SEQUENCE [LARGE SCALE GENOMIC DNA]</scope>
    <source>
        <strain>ATCC 14580 / DSM 13 / JCM 2505 / CCUG 7422 / NBRC 12200 / NCIMB 9375 / NCTC 10341 / NRRL NRS-1264 / Gibson 46</strain>
    </source>
</reference>
<reference key="2">
    <citation type="journal article" date="2004" name="Genome Biol.">
        <title>Complete genome sequence of the industrial bacterium Bacillus licheniformis and comparisons with closely related Bacillus species.</title>
        <authorList>
            <person name="Rey M.W."/>
            <person name="Ramaiya P."/>
            <person name="Nelson B.A."/>
            <person name="Brody-Karpin S.D."/>
            <person name="Zaretsky E.J."/>
            <person name="Tang M."/>
            <person name="Lopez de Leon A."/>
            <person name="Xiang H."/>
            <person name="Gusti V."/>
            <person name="Clausen I.G."/>
            <person name="Olsen P.B."/>
            <person name="Rasmussen M.D."/>
            <person name="Andersen J.T."/>
            <person name="Joergensen P.L."/>
            <person name="Larsen T.S."/>
            <person name="Sorokin A."/>
            <person name="Bolotin A."/>
            <person name="Lapidus A."/>
            <person name="Galleron N."/>
            <person name="Ehrlich S.D."/>
            <person name="Berka R.M."/>
        </authorList>
    </citation>
    <scope>NUCLEOTIDE SEQUENCE [LARGE SCALE GENOMIC DNA]</scope>
    <source>
        <strain>ATCC 14580 / DSM 13 / JCM 2505 / CCUG 7422 / NBRC 12200 / NCIMB 9375 / NCTC 10341 / NRRL NRS-1264 / Gibson 46</strain>
    </source>
</reference>
<dbReference type="EC" id="2.1.2.10" evidence="1"/>
<dbReference type="EMBL" id="CP000002">
    <property type="protein sequence ID" value="AAU24146.1"/>
    <property type="molecule type" value="Genomic_DNA"/>
</dbReference>
<dbReference type="EMBL" id="AE017333">
    <property type="protein sequence ID" value="AAU41505.1"/>
    <property type="molecule type" value="Genomic_DNA"/>
</dbReference>
<dbReference type="RefSeq" id="WP_003183436.1">
    <property type="nucleotide sequence ID" value="NC_006322.1"/>
</dbReference>
<dbReference type="SMR" id="Q65HF9"/>
<dbReference type="STRING" id="279010.BL01562"/>
<dbReference type="GeneID" id="92860774"/>
<dbReference type="KEGG" id="bld:BLi02631"/>
<dbReference type="KEGG" id="bli:BL01562"/>
<dbReference type="eggNOG" id="COG0404">
    <property type="taxonomic scope" value="Bacteria"/>
</dbReference>
<dbReference type="HOGENOM" id="CLU_007884_10_2_9"/>
<dbReference type="Proteomes" id="UP000000606">
    <property type="component" value="Chromosome"/>
</dbReference>
<dbReference type="GO" id="GO:0005829">
    <property type="term" value="C:cytosol"/>
    <property type="evidence" value="ECO:0007669"/>
    <property type="project" value="TreeGrafter"/>
</dbReference>
<dbReference type="GO" id="GO:0005960">
    <property type="term" value="C:glycine cleavage complex"/>
    <property type="evidence" value="ECO:0007669"/>
    <property type="project" value="InterPro"/>
</dbReference>
<dbReference type="GO" id="GO:0004047">
    <property type="term" value="F:aminomethyltransferase activity"/>
    <property type="evidence" value="ECO:0007669"/>
    <property type="project" value="UniProtKB-UniRule"/>
</dbReference>
<dbReference type="GO" id="GO:0008483">
    <property type="term" value="F:transaminase activity"/>
    <property type="evidence" value="ECO:0007669"/>
    <property type="project" value="UniProtKB-KW"/>
</dbReference>
<dbReference type="GO" id="GO:0019464">
    <property type="term" value="P:glycine decarboxylation via glycine cleavage system"/>
    <property type="evidence" value="ECO:0007669"/>
    <property type="project" value="UniProtKB-UniRule"/>
</dbReference>
<dbReference type="FunFam" id="2.40.30.110:FF:000003">
    <property type="entry name" value="Aminomethyltransferase"/>
    <property type="match status" value="1"/>
</dbReference>
<dbReference type="FunFam" id="3.30.70.1400:FF:000001">
    <property type="entry name" value="Aminomethyltransferase"/>
    <property type="match status" value="1"/>
</dbReference>
<dbReference type="FunFam" id="4.10.1250.10:FF:000001">
    <property type="entry name" value="Aminomethyltransferase"/>
    <property type="match status" value="1"/>
</dbReference>
<dbReference type="Gene3D" id="2.40.30.110">
    <property type="entry name" value="Aminomethyltransferase beta-barrel domains"/>
    <property type="match status" value="1"/>
</dbReference>
<dbReference type="Gene3D" id="3.30.70.1400">
    <property type="entry name" value="Aminomethyltransferase beta-barrel domains"/>
    <property type="match status" value="1"/>
</dbReference>
<dbReference type="Gene3D" id="4.10.1250.10">
    <property type="entry name" value="Aminomethyltransferase fragment"/>
    <property type="match status" value="1"/>
</dbReference>
<dbReference type="Gene3D" id="3.30.1360.120">
    <property type="entry name" value="Probable tRNA modification gtpase trme, domain 1"/>
    <property type="match status" value="1"/>
</dbReference>
<dbReference type="HAMAP" id="MF_00259">
    <property type="entry name" value="GcvT"/>
    <property type="match status" value="1"/>
</dbReference>
<dbReference type="InterPro" id="IPR006223">
    <property type="entry name" value="GCS_T"/>
</dbReference>
<dbReference type="InterPro" id="IPR022903">
    <property type="entry name" value="GCS_T_bac"/>
</dbReference>
<dbReference type="InterPro" id="IPR013977">
    <property type="entry name" value="GCST_C"/>
</dbReference>
<dbReference type="InterPro" id="IPR006222">
    <property type="entry name" value="GCV_T_N"/>
</dbReference>
<dbReference type="InterPro" id="IPR028896">
    <property type="entry name" value="GcvT/YgfZ/DmdA"/>
</dbReference>
<dbReference type="InterPro" id="IPR029043">
    <property type="entry name" value="GcvT/YgfZ_C"/>
</dbReference>
<dbReference type="InterPro" id="IPR027266">
    <property type="entry name" value="TrmE/GcvT_dom1"/>
</dbReference>
<dbReference type="NCBIfam" id="TIGR00528">
    <property type="entry name" value="gcvT"/>
    <property type="match status" value="1"/>
</dbReference>
<dbReference type="NCBIfam" id="NF001567">
    <property type="entry name" value="PRK00389.1"/>
    <property type="match status" value="1"/>
</dbReference>
<dbReference type="PANTHER" id="PTHR43757">
    <property type="entry name" value="AMINOMETHYLTRANSFERASE"/>
    <property type="match status" value="1"/>
</dbReference>
<dbReference type="PANTHER" id="PTHR43757:SF2">
    <property type="entry name" value="AMINOMETHYLTRANSFERASE, MITOCHONDRIAL"/>
    <property type="match status" value="1"/>
</dbReference>
<dbReference type="Pfam" id="PF01571">
    <property type="entry name" value="GCV_T"/>
    <property type="match status" value="1"/>
</dbReference>
<dbReference type="Pfam" id="PF08669">
    <property type="entry name" value="GCV_T_C"/>
    <property type="match status" value="1"/>
</dbReference>
<dbReference type="PIRSF" id="PIRSF006487">
    <property type="entry name" value="GcvT"/>
    <property type="match status" value="1"/>
</dbReference>
<dbReference type="SUPFAM" id="SSF101790">
    <property type="entry name" value="Aminomethyltransferase beta-barrel domain"/>
    <property type="match status" value="1"/>
</dbReference>
<dbReference type="SUPFAM" id="SSF103025">
    <property type="entry name" value="Folate-binding domain"/>
    <property type="match status" value="1"/>
</dbReference>
<organism>
    <name type="scientific">Bacillus licheniformis (strain ATCC 14580 / DSM 13 / JCM 2505 / CCUG 7422 / NBRC 12200 / NCIMB 9375 / NCTC 10341 / NRRL NRS-1264 / Gibson 46)</name>
    <dbReference type="NCBI Taxonomy" id="279010"/>
    <lineage>
        <taxon>Bacteria</taxon>
        <taxon>Bacillati</taxon>
        <taxon>Bacillota</taxon>
        <taxon>Bacilli</taxon>
        <taxon>Bacillales</taxon>
        <taxon>Bacillaceae</taxon>
        <taxon>Bacillus</taxon>
    </lineage>
</organism>
<protein>
    <recommendedName>
        <fullName evidence="1">Aminomethyltransferase</fullName>
        <ecNumber evidence="1">2.1.2.10</ecNumber>
    </recommendedName>
    <alternativeName>
        <fullName evidence="1">Glycine cleavage system T protein</fullName>
    </alternativeName>
</protein>
<accession>Q65HF9</accession>
<accession>Q62SW3</accession>
<sequence length="364" mass="40000">MLKRTPLFDLYKEYGGKTIDFGGWELPVQFSSIKEEHEAVRTKAGLFDVSHMGEVEITGTDSLPFLQKLLTNDVSTLKEGGAQYTAMCYEDGGTIDDLLVYKKAANVYMLVINAANIDKDVDWMNKHIKGDVSVRNVSDEIALLALQGPKAEAILKQVADHDLAELKPFMFRDDAAVGSVQALVSRTGYTGEDGFEIYCRNEDAACIWKLLLETGKDSGLVPCGLGARDTLRFEAKLPLYGQELSKDITPIEAGIGFAVKTNKASDFIGKAVLASQKEHGADRKLVGLEMIDKGIPRHGYAVYYQGEQAGEVTTGTQSPTLKKNVGLALLKKEACALDTVVEVEIRNKRLKAKIVKTPFYKRQP</sequence>
<name>GCST_BACLD</name>
<proteinExistence type="inferred from homology"/>